<proteinExistence type="inferred from homology"/>
<keyword id="KW-0012">Acyltransferase</keyword>
<keyword id="KW-0441">Lipid A biosynthesis</keyword>
<keyword id="KW-0444">Lipid biosynthesis</keyword>
<keyword id="KW-0443">Lipid metabolism</keyword>
<keyword id="KW-0677">Repeat</keyword>
<keyword id="KW-0808">Transferase</keyword>
<sequence length="343" mass="36810">MQLQEIAQKLGCPYEGDPTLEIHGVASLAEARPGELSFLSEARYLPLLEQTQASAVIVEESLVLPRPIACLRGKDPRLLFAQAIELFYQPYRLPVGIHPTAVIDPSVELGEGVAIGPHVVVMEGVKIGDYTQIHPNVTIYPHVRVGSRCQLFANCVIHERTEIGDDCLIHSGAVIGDDGFGHIPLPDGSWRRMLQAGRVVLEDGVEVGSNTTIDRAAVGETRIGRGTKIDNLVQIGHGVKTGSHCLIVAQVGIAGSTQLGHHVILAGQCGLAGHLHIGDGVRVAAQTGVTSDVPAGQTVAGYPHQPIAEWRRSMAVQRHLPELQRALRKLEARVAKLEQNGGR</sequence>
<comment type="function">
    <text evidence="1">Catalyzes the N-acylation of UDP-3-O-acylglucosamine using 3-hydroxyacyl-ACP as the acyl donor. Is involved in the biosynthesis of lipid A, a phosphorylated glycolipid that anchors the lipopolysaccharide to the outer membrane of the cell.</text>
</comment>
<comment type="catalytic activity">
    <reaction evidence="1">
        <text>a UDP-3-O-[(3R)-3-hydroxyacyl]-alpha-D-glucosamine + a (3R)-hydroxyacyl-[ACP] = a UDP-2-N,3-O-bis[(3R)-3-hydroxyacyl]-alpha-D-glucosamine + holo-[ACP] + H(+)</text>
        <dbReference type="Rhea" id="RHEA:53836"/>
        <dbReference type="Rhea" id="RHEA-COMP:9685"/>
        <dbReference type="Rhea" id="RHEA-COMP:9945"/>
        <dbReference type="ChEBI" id="CHEBI:15378"/>
        <dbReference type="ChEBI" id="CHEBI:64479"/>
        <dbReference type="ChEBI" id="CHEBI:78827"/>
        <dbReference type="ChEBI" id="CHEBI:137740"/>
        <dbReference type="ChEBI" id="CHEBI:137748"/>
        <dbReference type="EC" id="2.3.1.191"/>
    </reaction>
</comment>
<comment type="pathway">
    <text evidence="1">Bacterial outer membrane biogenesis; LPS lipid A biosynthesis.</text>
</comment>
<comment type="subunit">
    <text evidence="1">Homotrimer.</text>
</comment>
<comment type="similarity">
    <text evidence="1">Belongs to the transferase hexapeptide repeat family. LpxD subfamily.</text>
</comment>
<dbReference type="EC" id="2.3.1.191" evidence="1"/>
<dbReference type="EMBL" id="CP000239">
    <property type="protein sequence ID" value="ABC99213.1"/>
    <property type="molecule type" value="Genomic_DNA"/>
</dbReference>
<dbReference type="RefSeq" id="WP_011429896.1">
    <property type="nucleotide sequence ID" value="NC_007775.1"/>
</dbReference>
<dbReference type="SMR" id="Q2JVM2"/>
<dbReference type="STRING" id="321327.CYA_1015"/>
<dbReference type="KEGG" id="cya:CYA_1015"/>
<dbReference type="eggNOG" id="COG1044">
    <property type="taxonomic scope" value="Bacteria"/>
</dbReference>
<dbReference type="HOGENOM" id="CLU_049865_0_0_3"/>
<dbReference type="OrthoDB" id="9784739at2"/>
<dbReference type="UniPathway" id="UPA00973"/>
<dbReference type="Proteomes" id="UP000008818">
    <property type="component" value="Chromosome"/>
</dbReference>
<dbReference type="GO" id="GO:0031470">
    <property type="term" value="C:carboxysome"/>
    <property type="evidence" value="ECO:0007669"/>
    <property type="project" value="UniProtKB-ARBA"/>
</dbReference>
<dbReference type="GO" id="GO:0016020">
    <property type="term" value="C:membrane"/>
    <property type="evidence" value="ECO:0007669"/>
    <property type="project" value="GOC"/>
</dbReference>
<dbReference type="GO" id="GO:0016410">
    <property type="term" value="F:N-acyltransferase activity"/>
    <property type="evidence" value="ECO:0007669"/>
    <property type="project" value="InterPro"/>
</dbReference>
<dbReference type="GO" id="GO:0043886">
    <property type="term" value="F:structural constituent of carboxysome shell"/>
    <property type="evidence" value="ECO:0007669"/>
    <property type="project" value="UniProtKB-ARBA"/>
</dbReference>
<dbReference type="GO" id="GO:0009245">
    <property type="term" value="P:lipid A biosynthetic process"/>
    <property type="evidence" value="ECO:0007669"/>
    <property type="project" value="UniProtKB-UniRule"/>
</dbReference>
<dbReference type="CDD" id="cd03352">
    <property type="entry name" value="LbH_LpxD"/>
    <property type="match status" value="1"/>
</dbReference>
<dbReference type="Gene3D" id="2.160.10.10">
    <property type="entry name" value="Hexapeptide repeat proteins"/>
    <property type="match status" value="1"/>
</dbReference>
<dbReference type="Gene3D" id="3.40.1390.10">
    <property type="entry name" value="MurE/MurF, N-terminal domain"/>
    <property type="match status" value="1"/>
</dbReference>
<dbReference type="HAMAP" id="MF_00523">
    <property type="entry name" value="LpxD"/>
    <property type="match status" value="1"/>
</dbReference>
<dbReference type="InterPro" id="IPR001451">
    <property type="entry name" value="Hexapep"/>
</dbReference>
<dbReference type="InterPro" id="IPR007691">
    <property type="entry name" value="LpxD"/>
</dbReference>
<dbReference type="InterPro" id="IPR011004">
    <property type="entry name" value="Trimer_LpxA-like_sf"/>
</dbReference>
<dbReference type="InterPro" id="IPR020573">
    <property type="entry name" value="UDP_GlcNAc_AcTrfase_non-rep"/>
</dbReference>
<dbReference type="NCBIfam" id="TIGR01853">
    <property type="entry name" value="lipid_A_lpxD"/>
    <property type="match status" value="1"/>
</dbReference>
<dbReference type="NCBIfam" id="NF002060">
    <property type="entry name" value="PRK00892.1"/>
    <property type="match status" value="1"/>
</dbReference>
<dbReference type="PANTHER" id="PTHR43378">
    <property type="entry name" value="UDP-3-O-ACYLGLUCOSAMINE N-ACYLTRANSFERASE"/>
    <property type="match status" value="1"/>
</dbReference>
<dbReference type="PANTHER" id="PTHR43378:SF2">
    <property type="entry name" value="UDP-3-O-ACYLGLUCOSAMINE N-ACYLTRANSFERASE 1, MITOCHONDRIAL-RELATED"/>
    <property type="match status" value="1"/>
</dbReference>
<dbReference type="Pfam" id="PF00132">
    <property type="entry name" value="Hexapep"/>
    <property type="match status" value="2"/>
</dbReference>
<dbReference type="Pfam" id="PF04613">
    <property type="entry name" value="LpxD"/>
    <property type="match status" value="1"/>
</dbReference>
<dbReference type="SUPFAM" id="SSF51161">
    <property type="entry name" value="Trimeric LpxA-like enzymes"/>
    <property type="match status" value="1"/>
</dbReference>
<reference key="1">
    <citation type="journal article" date="2007" name="ISME J.">
        <title>Population level functional diversity in a microbial community revealed by comparative genomic and metagenomic analyses.</title>
        <authorList>
            <person name="Bhaya D."/>
            <person name="Grossman A.R."/>
            <person name="Steunou A.-S."/>
            <person name="Khuri N."/>
            <person name="Cohan F.M."/>
            <person name="Hamamura N."/>
            <person name="Melendrez M.C."/>
            <person name="Bateson M.M."/>
            <person name="Ward D.M."/>
            <person name="Heidelberg J.F."/>
        </authorList>
    </citation>
    <scope>NUCLEOTIDE SEQUENCE [LARGE SCALE GENOMIC DNA]</scope>
    <source>
        <strain>JA-3-3Ab</strain>
    </source>
</reference>
<organism>
    <name type="scientific">Synechococcus sp. (strain JA-3-3Ab)</name>
    <name type="common">Cyanobacteria bacterium Yellowstone A-Prime</name>
    <dbReference type="NCBI Taxonomy" id="321327"/>
    <lineage>
        <taxon>Bacteria</taxon>
        <taxon>Bacillati</taxon>
        <taxon>Cyanobacteriota</taxon>
        <taxon>Cyanophyceae</taxon>
        <taxon>Synechococcales</taxon>
        <taxon>Synechococcaceae</taxon>
        <taxon>Synechococcus</taxon>
    </lineage>
</organism>
<name>LPXD_SYNJA</name>
<gene>
    <name evidence="1" type="primary">lpxD</name>
    <name type="ordered locus">CYA_1015</name>
</gene>
<feature type="chain" id="PRO_0000264446" description="UDP-3-O-acylglucosamine N-acyltransferase">
    <location>
        <begin position="1"/>
        <end position="343"/>
    </location>
</feature>
<feature type="active site" description="Proton acceptor" evidence="1">
    <location>
        <position position="237"/>
    </location>
</feature>
<accession>Q2JVM2</accession>
<evidence type="ECO:0000255" key="1">
    <source>
        <dbReference type="HAMAP-Rule" id="MF_00523"/>
    </source>
</evidence>
<protein>
    <recommendedName>
        <fullName evidence="1">UDP-3-O-acylglucosamine N-acyltransferase</fullName>
        <ecNumber evidence="1">2.3.1.191</ecNumber>
    </recommendedName>
</protein>